<dbReference type="EC" id="3.4.19.12" evidence="1"/>
<dbReference type="EMBL" id="BC087530">
    <property type="protein sequence ID" value="AAH87530.1"/>
    <property type="status" value="ALT_SEQ"/>
    <property type="molecule type" value="mRNA"/>
</dbReference>
<dbReference type="SMR" id="Q5M981"/>
<dbReference type="AGR" id="Xenbase:XB-GENE-6252498"/>
<dbReference type="Xenbase" id="XB-GENE-6252498">
    <property type="gene designation" value="usp12.S"/>
</dbReference>
<dbReference type="Proteomes" id="UP000186698">
    <property type="component" value="Unplaced"/>
</dbReference>
<dbReference type="GO" id="GO:0005737">
    <property type="term" value="C:cytoplasm"/>
    <property type="evidence" value="ECO:0000250"/>
    <property type="project" value="UniProtKB"/>
</dbReference>
<dbReference type="GO" id="GO:0005829">
    <property type="term" value="C:cytosol"/>
    <property type="evidence" value="ECO:0000318"/>
    <property type="project" value="GO_Central"/>
</dbReference>
<dbReference type="GO" id="GO:0005634">
    <property type="term" value="C:nucleus"/>
    <property type="evidence" value="ECO:0000250"/>
    <property type="project" value="UniProtKB"/>
</dbReference>
<dbReference type="GO" id="GO:0005886">
    <property type="term" value="C:plasma membrane"/>
    <property type="evidence" value="ECO:0000250"/>
    <property type="project" value="UniProtKB"/>
</dbReference>
<dbReference type="GO" id="GO:0004843">
    <property type="term" value="F:cysteine-type deubiquitinase activity"/>
    <property type="evidence" value="ECO:0000250"/>
    <property type="project" value="UniProtKB"/>
</dbReference>
<dbReference type="GO" id="GO:0004197">
    <property type="term" value="F:cysteine-type endopeptidase activity"/>
    <property type="evidence" value="ECO:0000250"/>
    <property type="project" value="UniProtKB"/>
</dbReference>
<dbReference type="GO" id="GO:0046872">
    <property type="term" value="F:metal ion binding"/>
    <property type="evidence" value="ECO:0007669"/>
    <property type="project" value="UniProtKB-KW"/>
</dbReference>
<dbReference type="GO" id="GO:0016579">
    <property type="term" value="P:protein deubiquitination"/>
    <property type="evidence" value="ECO:0000250"/>
    <property type="project" value="UniProtKB"/>
</dbReference>
<dbReference type="GO" id="GO:0006508">
    <property type="term" value="P:proteolysis"/>
    <property type="evidence" value="ECO:0007669"/>
    <property type="project" value="UniProtKB-KW"/>
</dbReference>
<dbReference type="GO" id="GO:0031647">
    <property type="term" value="P:regulation of protein stability"/>
    <property type="evidence" value="ECO:0000318"/>
    <property type="project" value="GO_Central"/>
</dbReference>
<dbReference type="CDD" id="cd02663">
    <property type="entry name" value="Peptidase_C19G"/>
    <property type="match status" value="1"/>
</dbReference>
<dbReference type="FunFam" id="3.90.70.10:FF:000003">
    <property type="entry name" value="Ubiquitin carboxyl-terminal hydrolase 46"/>
    <property type="match status" value="1"/>
</dbReference>
<dbReference type="Gene3D" id="3.90.70.10">
    <property type="entry name" value="Cysteine proteinases"/>
    <property type="match status" value="1"/>
</dbReference>
<dbReference type="InterPro" id="IPR038765">
    <property type="entry name" value="Papain-like_cys_pep_sf"/>
</dbReference>
<dbReference type="InterPro" id="IPR050164">
    <property type="entry name" value="Peptidase_C19"/>
</dbReference>
<dbReference type="InterPro" id="IPR001394">
    <property type="entry name" value="Peptidase_C19_UCH"/>
</dbReference>
<dbReference type="InterPro" id="IPR018200">
    <property type="entry name" value="USP_CS"/>
</dbReference>
<dbReference type="InterPro" id="IPR028889">
    <property type="entry name" value="USP_dom"/>
</dbReference>
<dbReference type="PANTHER" id="PTHR24006">
    <property type="entry name" value="UBIQUITIN CARBOXYL-TERMINAL HYDROLASE"/>
    <property type="match status" value="1"/>
</dbReference>
<dbReference type="PANTHER" id="PTHR24006:SF647">
    <property type="entry name" value="UBIQUITIN CARBOXYL-TERMINAL HYDROLASE 12"/>
    <property type="match status" value="1"/>
</dbReference>
<dbReference type="Pfam" id="PF00443">
    <property type="entry name" value="UCH"/>
    <property type="match status" value="1"/>
</dbReference>
<dbReference type="SUPFAM" id="SSF54001">
    <property type="entry name" value="Cysteine proteinases"/>
    <property type="match status" value="1"/>
</dbReference>
<dbReference type="PROSITE" id="PS00972">
    <property type="entry name" value="USP_1"/>
    <property type="match status" value="1"/>
</dbReference>
<dbReference type="PROSITE" id="PS00973">
    <property type="entry name" value="USP_2"/>
    <property type="match status" value="1"/>
</dbReference>
<dbReference type="PROSITE" id="PS50235">
    <property type="entry name" value="USP_3"/>
    <property type="match status" value="1"/>
</dbReference>
<organism>
    <name type="scientific">Xenopus laevis</name>
    <name type="common">African clawed frog</name>
    <dbReference type="NCBI Taxonomy" id="8355"/>
    <lineage>
        <taxon>Eukaryota</taxon>
        <taxon>Metazoa</taxon>
        <taxon>Chordata</taxon>
        <taxon>Craniata</taxon>
        <taxon>Vertebrata</taxon>
        <taxon>Euteleostomi</taxon>
        <taxon>Amphibia</taxon>
        <taxon>Batrachia</taxon>
        <taxon>Anura</taxon>
        <taxon>Pipoidea</taxon>
        <taxon>Pipidae</taxon>
        <taxon>Xenopodinae</taxon>
        <taxon>Xenopus</taxon>
        <taxon>Xenopus</taxon>
    </lineage>
</organism>
<reference key="1">
    <citation type="submission" date="2004-12" db="EMBL/GenBank/DDBJ databases">
        <authorList>
            <consortium name="NIH - Xenopus Gene Collection (XGC) project"/>
        </authorList>
    </citation>
    <scope>NUCLEOTIDE SEQUENCE [LARGE SCALE MRNA]</scope>
    <source>
        <tissue>Testis</tissue>
    </source>
</reference>
<name>UB12B_XENLA</name>
<comment type="function">
    <text evidence="1">Deubiquitinating enzyme. Has almost no deubiquitinating activity by itself and requires the interaction with wdr48 to have a high activity.</text>
</comment>
<comment type="catalytic activity">
    <reaction evidence="1">
        <text>Thiol-dependent hydrolysis of ester, thioester, amide, peptide and isopeptide bonds formed by the C-terminal Gly of ubiquitin (a 76-residue protein attached to proteins as an intracellular targeting signal).</text>
        <dbReference type="EC" id="3.4.19.12"/>
    </reaction>
</comment>
<comment type="subunit">
    <text evidence="1">Interacts with WDR48.</text>
</comment>
<comment type="similarity">
    <text evidence="5">Belongs to the peptidase C19 family. USP12/USP46 subfamily.</text>
</comment>
<comment type="sequence caution" evidence="5">
    <conflict type="miscellaneous discrepancy">
        <sequence resource="EMBL-CDS" id="AAH87530"/>
    </conflict>
    <text>Conflict that suppressed the initiatory methionine.</text>
</comment>
<proteinExistence type="evidence at transcript level"/>
<sequence>MEILMTVSRIASICTMGANASALEKEIGPEQFPVNEHYFGLVNFGNTCYCNSVLQALYFCRPFREKVLAYKSQPRKKENLLTCLSDLFHSIATQKKKVGVIPPKKFITRLRKENELFDNYMQQDAHEFLNYLLNTIADILQEERKQEKQNGRIPNGNIDNENNNNTPDPTWVHEIFQGTLTNETRCLTCETISSKDEDFLDLSVDVEQNTSITHCLRGFSNTETLCSEYKYYCEECRSKQEAHKRMKVKKLPMILALHLKRFKYMDQLHRYTKLSYRVVFPLELRLFNTSGDATNPDRMYDLVAVVVHCGSGPNRGHYIAIVKSHDFWLLFDDDIVEKIDAQAIEEFYGLTSDISKNSESGYILFYQSRD</sequence>
<feature type="chain" id="PRO_0000378994" description="Ubiquitin carboxyl-terminal hydrolase 12-B">
    <location>
        <begin position="1"/>
        <end position="370"/>
    </location>
</feature>
<feature type="domain" description="USP">
    <location>
        <begin position="39"/>
        <end position="369"/>
    </location>
</feature>
<feature type="region of interest" description="Disordered" evidence="4">
    <location>
        <begin position="145"/>
        <end position="168"/>
    </location>
</feature>
<feature type="compositionally biased region" description="Low complexity" evidence="4">
    <location>
        <begin position="155"/>
        <end position="165"/>
    </location>
</feature>
<feature type="active site" description="Nucleophile" evidence="2 3">
    <location>
        <position position="48"/>
    </location>
</feature>
<feature type="active site" description="Proton acceptor" evidence="2 3">
    <location>
        <position position="317"/>
    </location>
</feature>
<feature type="binding site" evidence="1">
    <location>
        <position position="186"/>
    </location>
    <ligand>
        <name>Zn(2+)</name>
        <dbReference type="ChEBI" id="CHEBI:29105"/>
    </ligand>
</feature>
<feature type="binding site" evidence="1">
    <location>
        <position position="189"/>
    </location>
    <ligand>
        <name>Zn(2+)</name>
        <dbReference type="ChEBI" id="CHEBI:29105"/>
    </ligand>
</feature>
<feature type="binding site" evidence="1">
    <location>
        <position position="233"/>
    </location>
    <ligand>
        <name>Zn(2+)</name>
        <dbReference type="ChEBI" id="CHEBI:29105"/>
    </ligand>
</feature>
<feature type="binding site" evidence="1">
    <location>
        <position position="236"/>
    </location>
    <ligand>
        <name>Zn(2+)</name>
        <dbReference type="ChEBI" id="CHEBI:29105"/>
    </ligand>
</feature>
<accession>Q5M981</accession>
<protein>
    <recommendedName>
        <fullName>Ubiquitin carboxyl-terminal hydrolase 12-B</fullName>
        <ecNumber evidence="1">3.4.19.12</ecNumber>
    </recommendedName>
    <alternativeName>
        <fullName>Deubiquitinating enzyme 12-B</fullName>
    </alternativeName>
    <alternativeName>
        <fullName>Ubiquitin thioesterase 12-B</fullName>
    </alternativeName>
    <alternativeName>
        <fullName>Ubiquitin-specific-processing protease 12-B</fullName>
    </alternativeName>
</protein>
<keyword id="KW-0378">Hydrolase</keyword>
<keyword id="KW-0479">Metal-binding</keyword>
<keyword id="KW-0645">Protease</keyword>
<keyword id="KW-1185">Reference proteome</keyword>
<keyword id="KW-0788">Thiol protease</keyword>
<keyword id="KW-0833">Ubl conjugation pathway</keyword>
<keyword id="KW-0862">Zinc</keyword>
<evidence type="ECO:0000250" key="1">
    <source>
        <dbReference type="UniProtKB" id="O75317"/>
    </source>
</evidence>
<evidence type="ECO:0000255" key="2">
    <source>
        <dbReference type="PROSITE-ProRule" id="PRU10092"/>
    </source>
</evidence>
<evidence type="ECO:0000255" key="3">
    <source>
        <dbReference type="PROSITE-ProRule" id="PRU10093"/>
    </source>
</evidence>
<evidence type="ECO:0000256" key="4">
    <source>
        <dbReference type="SAM" id="MobiDB-lite"/>
    </source>
</evidence>
<evidence type="ECO:0000305" key="5"/>
<gene>
    <name type="primary">usp12-b</name>
</gene>